<organism>
    <name type="scientific">Staphylococcus aureus (strain MSSA476)</name>
    <dbReference type="NCBI Taxonomy" id="282459"/>
    <lineage>
        <taxon>Bacteria</taxon>
        <taxon>Bacillati</taxon>
        <taxon>Bacillota</taxon>
        <taxon>Bacilli</taxon>
        <taxon>Bacillales</taxon>
        <taxon>Staphylococcaceae</taxon>
        <taxon>Staphylococcus</taxon>
    </lineage>
</organism>
<comment type="PTM">
    <text evidence="1">The N-terminus is cleaved by ribosomal processing cysteine protease Prp.</text>
</comment>
<comment type="similarity">
    <text evidence="2">Belongs to the bacterial ribosomal protein bL27 family.</text>
</comment>
<evidence type="ECO:0000250" key="1">
    <source>
        <dbReference type="UniProtKB" id="Q2FXT0"/>
    </source>
</evidence>
<evidence type="ECO:0000255" key="2">
    <source>
        <dbReference type="HAMAP-Rule" id="MF_00539"/>
    </source>
</evidence>
<evidence type="ECO:0000305" key="3"/>
<dbReference type="EMBL" id="BX571857">
    <property type="protein sequence ID" value="CAG43382.1"/>
    <property type="molecule type" value="Genomic_DNA"/>
</dbReference>
<dbReference type="RefSeq" id="WP_000916187.1">
    <property type="nucleotide sequence ID" value="NC_002953.3"/>
</dbReference>
<dbReference type="SMR" id="Q6G8S4"/>
<dbReference type="GeneID" id="98346013"/>
<dbReference type="KEGG" id="sas:SAS1581"/>
<dbReference type="HOGENOM" id="CLU_095424_4_0_9"/>
<dbReference type="GO" id="GO:0022625">
    <property type="term" value="C:cytosolic large ribosomal subunit"/>
    <property type="evidence" value="ECO:0007669"/>
    <property type="project" value="TreeGrafter"/>
</dbReference>
<dbReference type="GO" id="GO:0003735">
    <property type="term" value="F:structural constituent of ribosome"/>
    <property type="evidence" value="ECO:0007669"/>
    <property type="project" value="InterPro"/>
</dbReference>
<dbReference type="GO" id="GO:0006412">
    <property type="term" value="P:translation"/>
    <property type="evidence" value="ECO:0007669"/>
    <property type="project" value="UniProtKB-UniRule"/>
</dbReference>
<dbReference type="FunFam" id="2.40.50.100:FF:000004">
    <property type="entry name" value="50S ribosomal protein L27"/>
    <property type="match status" value="1"/>
</dbReference>
<dbReference type="Gene3D" id="2.40.50.100">
    <property type="match status" value="1"/>
</dbReference>
<dbReference type="HAMAP" id="MF_00539">
    <property type="entry name" value="Ribosomal_bL27"/>
    <property type="match status" value="1"/>
</dbReference>
<dbReference type="InterPro" id="IPR001684">
    <property type="entry name" value="Ribosomal_bL27"/>
</dbReference>
<dbReference type="InterPro" id="IPR018261">
    <property type="entry name" value="Ribosomal_bL27_CS"/>
</dbReference>
<dbReference type="NCBIfam" id="TIGR00062">
    <property type="entry name" value="L27"/>
    <property type="match status" value="1"/>
</dbReference>
<dbReference type="PANTHER" id="PTHR15893:SF0">
    <property type="entry name" value="LARGE RIBOSOMAL SUBUNIT PROTEIN BL27M"/>
    <property type="match status" value="1"/>
</dbReference>
<dbReference type="PANTHER" id="PTHR15893">
    <property type="entry name" value="RIBOSOMAL PROTEIN L27"/>
    <property type="match status" value="1"/>
</dbReference>
<dbReference type="Pfam" id="PF01016">
    <property type="entry name" value="Ribosomal_L27"/>
    <property type="match status" value="1"/>
</dbReference>
<dbReference type="PRINTS" id="PR00063">
    <property type="entry name" value="RIBOSOMALL27"/>
</dbReference>
<dbReference type="SUPFAM" id="SSF110324">
    <property type="entry name" value="Ribosomal L27 protein-like"/>
    <property type="match status" value="1"/>
</dbReference>
<dbReference type="PROSITE" id="PS00831">
    <property type="entry name" value="RIBOSOMAL_L27"/>
    <property type="match status" value="1"/>
</dbReference>
<keyword id="KW-0687">Ribonucleoprotein</keyword>
<keyword id="KW-0689">Ribosomal protein</keyword>
<protein>
    <recommendedName>
        <fullName evidence="2">Large ribosomal subunit protein bL27</fullName>
    </recommendedName>
    <alternativeName>
        <fullName evidence="3">50S ribosomal protein L27</fullName>
    </alternativeName>
</protein>
<accession>Q6G8S4</accession>
<name>RL27_STAAS</name>
<feature type="propeptide" id="PRO_0000459932" evidence="1">
    <location>
        <begin position="1"/>
        <end position="9"/>
    </location>
</feature>
<feature type="chain" id="PRO_0000181168" description="Large ribosomal subunit protein bL27">
    <location>
        <begin position="10"/>
        <end position="94"/>
    </location>
</feature>
<gene>
    <name evidence="2" type="primary">rpmA</name>
    <name type="ordered locus">SAS1581</name>
</gene>
<reference key="1">
    <citation type="journal article" date="2004" name="Proc. Natl. Acad. Sci. U.S.A.">
        <title>Complete genomes of two clinical Staphylococcus aureus strains: evidence for the rapid evolution of virulence and drug resistance.</title>
        <authorList>
            <person name="Holden M.T.G."/>
            <person name="Feil E.J."/>
            <person name="Lindsay J.A."/>
            <person name="Peacock S.J."/>
            <person name="Day N.P.J."/>
            <person name="Enright M.C."/>
            <person name="Foster T.J."/>
            <person name="Moore C.E."/>
            <person name="Hurst L."/>
            <person name="Atkin R."/>
            <person name="Barron A."/>
            <person name="Bason N."/>
            <person name="Bentley S.D."/>
            <person name="Chillingworth C."/>
            <person name="Chillingworth T."/>
            <person name="Churcher C."/>
            <person name="Clark L."/>
            <person name="Corton C."/>
            <person name="Cronin A."/>
            <person name="Doggett J."/>
            <person name="Dowd L."/>
            <person name="Feltwell T."/>
            <person name="Hance Z."/>
            <person name="Harris B."/>
            <person name="Hauser H."/>
            <person name="Holroyd S."/>
            <person name="Jagels K."/>
            <person name="James K.D."/>
            <person name="Lennard N."/>
            <person name="Line A."/>
            <person name="Mayes R."/>
            <person name="Moule S."/>
            <person name="Mungall K."/>
            <person name="Ormond D."/>
            <person name="Quail M.A."/>
            <person name="Rabbinowitsch E."/>
            <person name="Rutherford K.M."/>
            <person name="Sanders M."/>
            <person name="Sharp S."/>
            <person name="Simmonds M."/>
            <person name="Stevens K."/>
            <person name="Whitehead S."/>
            <person name="Barrell B.G."/>
            <person name="Spratt B.G."/>
            <person name="Parkhill J."/>
        </authorList>
    </citation>
    <scope>NUCLEOTIDE SEQUENCE [LARGE SCALE GENOMIC DNA]</scope>
    <source>
        <strain>MSSA476</strain>
    </source>
</reference>
<sequence length="94" mass="10315">MLKLNLQFFASKKGVSSTKNGRDSESKRLGAKRADGQFVTGGSILYRQRGTKIYPGENVGRGGDDTLFAKIDGVVKFERKGRDKKQVSVYAVAE</sequence>
<proteinExistence type="inferred from homology"/>